<proteinExistence type="inferred from homology"/>
<accession>Q1XDU4</accession>
<reference key="1">
    <citation type="submission" date="2003-11" db="EMBL/GenBank/DDBJ databases">
        <title>Whole genome sequence of Porphyra yezoensis chloroplast.</title>
        <authorList>
            <person name="Kunimoto M."/>
            <person name="Morishima K."/>
            <person name="Yoshikawa M."/>
            <person name="Fukuda S."/>
            <person name="Kobayashi T."/>
            <person name="Kobayashi M."/>
            <person name="Okazaki T."/>
            <person name="Ohara I."/>
            <person name="Nakayama I."/>
        </authorList>
    </citation>
    <scope>NUCLEOTIDE SEQUENCE [LARGE SCALE GENOMIC DNA]</scope>
    <source>
        <strain>U-51</strain>
    </source>
</reference>
<evidence type="ECO:0000250" key="1"/>
<evidence type="ECO:0000255" key="2"/>
<evidence type="ECO:0000305" key="3"/>
<dbReference type="EMBL" id="AP006715">
    <property type="protein sequence ID" value="BAE92317.1"/>
    <property type="molecule type" value="Genomic_DNA"/>
</dbReference>
<dbReference type="RefSeq" id="YP_536874.1">
    <property type="nucleotide sequence ID" value="NC_007932.1"/>
</dbReference>
<dbReference type="SMR" id="Q1XDU4"/>
<dbReference type="GeneID" id="3978951"/>
<dbReference type="GO" id="GO:0009535">
    <property type="term" value="C:chloroplast thylakoid membrane"/>
    <property type="evidence" value="ECO:0007669"/>
    <property type="project" value="UniProtKB-SubCell"/>
</dbReference>
<dbReference type="GO" id="GO:0009538">
    <property type="term" value="C:photosystem I reaction center"/>
    <property type="evidence" value="ECO:0007669"/>
    <property type="project" value="InterPro"/>
</dbReference>
<dbReference type="GO" id="GO:0015979">
    <property type="term" value="P:photosynthesis"/>
    <property type="evidence" value="ECO:0007669"/>
    <property type="project" value="UniProtKB-KW"/>
</dbReference>
<dbReference type="FunFam" id="1.10.8.110:FF:000001">
    <property type="entry name" value="Photosystem I reaction center subunit III"/>
    <property type="match status" value="1"/>
</dbReference>
<dbReference type="Gene3D" id="1.10.8.110">
    <property type="entry name" value="Photosystem I PsaF, reaction centre subunit III"/>
    <property type="match status" value="1"/>
</dbReference>
<dbReference type="InterPro" id="IPR003666">
    <property type="entry name" value="PSI_PsaF"/>
</dbReference>
<dbReference type="InterPro" id="IPR036577">
    <property type="entry name" value="PSI_PsaF_sf"/>
</dbReference>
<dbReference type="PANTHER" id="PTHR34939">
    <property type="entry name" value="PHOTOSYSTEM I REACTION CENTER SUBUNIT III, CHLOROPLASTIC"/>
    <property type="match status" value="1"/>
</dbReference>
<dbReference type="PANTHER" id="PTHR34939:SF1">
    <property type="entry name" value="PHOTOSYSTEM I REACTION CENTER SUBUNIT III, CHLOROPLASTIC"/>
    <property type="match status" value="1"/>
</dbReference>
<dbReference type="Pfam" id="PF02507">
    <property type="entry name" value="PSI_PsaF"/>
    <property type="match status" value="1"/>
</dbReference>
<dbReference type="SUPFAM" id="SSF81536">
    <property type="entry name" value="Subunit III of photosystem I reaction centre, PsaF"/>
    <property type="match status" value="1"/>
</dbReference>
<gene>
    <name type="primary">psaF</name>
</gene>
<feature type="signal peptide" evidence="2">
    <location>
        <begin position="1"/>
        <end position="20"/>
    </location>
</feature>
<feature type="chain" id="PRO_0000277251" description="Photosystem I reaction center subunit III">
    <location>
        <begin position="21"/>
        <end position="181"/>
    </location>
</feature>
<feature type="transmembrane region" description="Helical" evidence="2">
    <location>
        <begin position="100"/>
        <end position="120"/>
    </location>
</feature>
<sequence length="181" mass="19707">MCLTCLLALLIMSNPIIANAEVAGLVPCKDSAAFNKRMVNSVKKLQARLAKYDADTPPALALNKQIEKTKTRFATYGRAGLLCGTDGLPHLISDGRWSRAGDFVFPGLLFLYITGWIGWVGRGYLLSVAKTSKPTEKEIILDVPLAIKFMSSGFAWPLAAWQEFSSGQLIASNDDITVSPR</sequence>
<keyword id="KW-0150">Chloroplast</keyword>
<keyword id="KW-0472">Membrane</keyword>
<keyword id="KW-0602">Photosynthesis</keyword>
<keyword id="KW-0603">Photosystem I</keyword>
<keyword id="KW-0934">Plastid</keyword>
<keyword id="KW-0732">Signal</keyword>
<keyword id="KW-0793">Thylakoid</keyword>
<keyword id="KW-0812">Transmembrane</keyword>
<keyword id="KW-1133">Transmembrane helix</keyword>
<comment type="function">
    <text evidence="1">Probably participates in efficiency of electron transfer from plastocyanin to P700 (or cytochrome c553 in algae and cyanobacteria). This plastocyanin-docking protein contributes to the specific association of plastocyanin to PSI (By similarity).</text>
</comment>
<comment type="subcellular location">
    <subcellularLocation>
        <location evidence="3">Plastid</location>
        <location evidence="3">Chloroplast thylakoid membrane</location>
        <topology evidence="3">Single-pass membrane protein</topology>
    </subcellularLocation>
</comment>
<comment type="similarity">
    <text evidence="3">Belongs to the PsaF family.</text>
</comment>
<organism>
    <name type="scientific">Pyropia yezoensis</name>
    <name type="common">Susabi-nori</name>
    <name type="synonym">Porphyra yezoensis</name>
    <dbReference type="NCBI Taxonomy" id="2788"/>
    <lineage>
        <taxon>Eukaryota</taxon>
        <taxon>Rhodophyta</taxon>
        <taxon>Bangiophyceae</taxon>
        <taxon>Bangiales</taxon>
        <taxon>Bangiaceae</taxon>
        <taxon>Pyropia</taxon>
    </lineage>
</organism>
<geneLocation type="chloroplast"/>
<name>PSAF_PYRYE</name>
<protein>
    <recommendedName>
        <fullName>Photosystem I reaction center subunit III</fullName>
    </recommendedName>
    <alternativeName>
        <fullName>PSI-F</fullName>
    </alternativeName>
</protein>